<dbReference type="EMBL" id="BA000033">
    <property type="protein sequence ID" value="BAB95973.1"/>
    <property type="molecule type" value="Genomic_DNA"/>
</dbReference>
<dbReference type="RefSeq" id="WP_000215236.1">
    <property type="nucleotide sequence ID" value="NC_003923.1"/>
</dbReference>
<dbReference type="SMR" id="P0A0P7"/>
<dbReference type="KEGG" id="sam:MW2108"/>
<dbReference type="HOGENOM" id="CLU_113198_1_1_9"/>
<dbReference type="InterPro" id="IPR005531">
    <property type="entry name" value="Asp23"/>
</dbReference>
<dbReference type="PANTHER" id="PTHR34297:SF3">
    <property type="entry name" value="ALKALINE SHOCK PROTEIN 23"/>
    <property type="match status" value="1"/>
</dbReference>
<dbReference type="PANTHER" id="PTHR34297">
    <property type="entry name" value="HYPOTHETICAL CYTOSOLIC PROTEIN-RELATED"/>
    <property type="match status" value="1"/>
</dbReference>
<dbReference type="Pfam" id="PF03780">
    <property type="entry name" value="Asp23"/>
    <property type="match status" value="1"/>
</dbReference>
<accession>P0A0P7</accession>
<accession>Q53485</accession>
<gene>
    <name type="primary">asp23</name>
    <name type="ordered locus">MW2108</name>
</gene>
<organism>
    <name type="scientific">Staphylococcus aureus (strain MW2)</name>
    <dbReference type="NCBI Taxonomy" id="196620"/>
    <lineage>
        <taxon>Bacteria</taxon>
        <taxon>Bacillati</taxon>
        <taxon>Bacillota</taxon>
        <taxon>Bacilli</taxon>
        <taxon>Bacillales</taxon>
        <taxon>Staphylococcaceae</taxon>
        <taxon>Staphylococcus</taxon>
    </lineage>
</organism>
<sequence length="169" mass="19191">MTVDNNKAKQAYDNQTGVNEKEREERQKQQEQNQEPQFKNKLTFSDEVVEKIAGIAAREVKGILDMKGGLTDTFTNAFSSGNNVTQGVSVEVGEKQAAVDLKVILEYGESAPKIFRKVTELVKEQVKYITGLDVVEVNMQVDDVMTQKEWKQKHEKNNENNNQERQGLQ</sequence>
<protein>
    <recommendedName>
        <fullName>Alkaline shock protein 23</fullName>
    </recommendedName>
</protein>
<proteinExistence type="inferred from homology"/>
<reference key="1">
    <citation type="journal article" date="2002" name="Lancet">
        <title>Genome and virulence determinants of high virulence community-acquired MRSA.</title>
        <authorList>
            <person name="Baba T."/>
            <person name="Takeuchi F."/>
            <person name="Kuroda M."/>
            <person name="Yuzawa H."/>
            <person name="Aoki K."/>
            <person name="Oguchi A."/>
            <person name="Nagai Y."/>
            <person name="Iwama N."/>
            <person name="Asano K."/>
            <person name="Naimi T."/>
            <person name="Kuroda H."/>
            <person name="Cui L."/>
            <person name="Yamamoto K."/>
            <person name="Hiramatsu K."/>
        </authorList>
    </citation>
    <scope>NUCLEOTIDE SEQUENCE [LARGE SCALE GENOMIC DNA]</scope>
    <source>
        <strain>MW2</strain>
    </source>
</reference>
<name>ASP23_STAAW</name>
<evidence type="ECO:0000250" key="1"/>
<evidence type="ECO:0000256" key="2">
    <source>
        <dbReference type="SAM" id="MobiDB-lite"/>
    </source>
</evidence>
<evidence type="ECO:0000305" key="3"/>
<comment type="function">
    <text evidence="1">May play a key role in alkaline pH tolerance.</text>
</comment>
<comment type="similarity">
    <text evidence="3">Belongs to the asp23 family.</text>
</comment>
<feature type="chain" id="PRO_0000170481" description="Alkaline shock protein 23">
    <location>
        <begin position="1"/>
        <end position="169"/>
    </location>
</feature>
<feature type="region of interest" description="Disordered" evidence="2">
    <location>
        <begin position="1"/>
        <end position="40"/>
    </location>
</feature>
<feature type="region of interest" description="Disordered" evidence="2">
    <location>
        <begin position="148"/>
        <end position="169"/>
    </location>
</feature>
<feature type="compositionally biased region" description="Basic and acidic residues" evidence="2">
    <location>
        <begin position="19"/>
        <end position="29"/>
    </location>
</feature>
<feature type="compositionally biased region" description="Basic and acidic residues" evidence="2">
    <location>
        <begin position="148"/>
        <end position="158"/>
    </location>
</feature>
<feature type="compositionally biased region" description="Low complexity" evidence="2">
    <location>
        <begin position="159"/>
        <end position="169"/>
    </location>
</feature>